<proteinExistence type="evidence at protein level"/>
<name>TP1B_RANLU</name>
<sequence length="14" mass="1576">NFLGTLINLAKKIM</sequence>
<protein>
    <recommendedName>
        <fullName>Temporin-1Lb</fullName>
    </recommendedName>
</protein>
<keyword id="KW-0027">Amidation</keyword>
<keyword id="KW-0878">Amphibian defense peptide</keyword>
<keyword id="KW-0044">Antibiotic</keyword>
<keyword id="KW-0929">Antimicrobial</keyword>
<keyword id="KW-0903">Direct protein sequencing</keyword>
<keyword id="KW-0295">Fungicide</keyword>
<keyword id="KW-0964">Secreted</keyword>
<evidence type="ECO:0000269" key="1">
    <source>
    </source>
</evidence>
<evidence type="ECO:0000305" key="2"/>
<accession>P82831</accession>
<dbReference type="GO" id="GO:0005576">
    <property type="term" value="C:extracellular region"/>
    <property type="evidence" value="ECO:0007669"/>
    <property type="project" value="UniProtKB-SubCell"/>
</dbReference>
<dbReference type="GO" id="GO:0042742">
    <property type="term" value="P:defense response to bacterium"/>
    <property type="evidence" value="ECO:0007669"/>
    <property type="project" value="UniProtKB-KW"/>
</dbReference>
<dbReference type="GO" id="GO:0050832">
    <property type="term" value="P:defense response to fungus"/>
    <property type="evidence" value="ECO:0007669"/>
    <property type="project" value="UniProtKB-KW"/>
</dbReference>
<dbReference type="GO" id="GO:0031640">
    <property type="term" value="P:killing of cells of another organism"/>
    <property type="evidence" value="ECO:0007669"/>
    <property type="project" value="UniProtKB-KW"/>
</dbReference>
<organism>
    <name type="scientific">Rana luteiventris</name>
    <name type="common">Columbia spotted frog</name>
    <name type="synonym">Rana pretiosa luteiventris</name>
    <dbReference type="NCBI Taxonomy" id="58176"/>
    <lineage>
        <taxon>Eukaryota</taxon>
        <taxon>Metazoa</taxon>
        <taxon>Chordata</taxon>
        <taxon>Craniata</taxon>
        <taxon>Vertebrata</taxon>
        <taxon>Euteleostomi</taxon>
        <taxon>Amphibia</taxon>
        <taxon>Batrachia</taxon>
        <taxon>Anura</taxon>
        <taxon>Neobatrachia</taxon>
        <taxon>Ranoidea</taxon>
        <taxon>Ranidae</taxon>
        <taxon>Rana</taxon>
        <taxon>Rana</taxon>
    </lineage>
</organism>
<feature type="peptide" id="PRO_0000043576" description="Temporin-1Lb">
    <location>
        <begin position="1"/>
        <end position="14"/>
    </location>
</feature>
<feature type="modified residue" description="Methionine amide" evidence="1">
    <location>
        <position position="14"/>
    </location>
</feature>
<comment type="function">
    <text evidence="1">Antibacterial activity against Gram-positive bacterium S.aureus. Weak activity against Gram-negative bacterium E.coli and C.albicans.</text>
</comment>
<comment type="subcellular location">
    <subcellularLocation>
        <location>Secreted</location>
    </subcellularLocation>
</comment>
<comment type="tissue specificity">
    <text>Expressed by the skin glands.</text>
</comment>
<comment type="mass spectrometry" mass="1575.0" method="Electrospray" evidence="1"/>
<comment type="similarity">
    <text evidence="2">Belongs to the frog skin active peptide (FSAP) family. Temporin subfamily.</text>
</comment>
<reference key="1">
    <citation type="journal article" date="2000" name="Eur. J. Biochem.">
        <title>Peptides with antimicrobial activity from four different families isolated from the skins of the North American frogs Rana luteiventris, Rana berlandieri and Rana pipiens.</title>
        <authorList>
            <person name="Goraya J."/>
            <person name="Wang Y."/>
            <person name="Li Z."/>
            <person name="O'Flaherty M."/>
            <person name="Knoop F.C."/>
            <person name="Platz J.E."/>
            <person name="Conlon J.M."/>
        </authorList>
    </citation>
    <scope>PROTEIN SEQUENCE</scope>
    <scope>FUNCTION</scope>
    <scope>AMIDATION AT MET-14</scope>
    <scope>MASS SPECTROMETRY</scope>
    <source>
        <tissue>Skin secretion</tissue>
    </source>
</reference>